<comment type="function">
    <text evidence="1">Involved in the biosynthesis of the central metabolite phospho-alpha-D-ribosyl-1-pyrophosphate (PRPP) via the transfer of pyrophosphoryl group from ATP to 1-hydroxyl of ribose-5-phosphate (Rib-5-P).</text>
</comment>
<comment type="catalytic activity">
    <reaction evidence="1">
        <text>D-ribose 5-phosphate + ATP = 5-phospho-alpha-D-ribose 1-diphosphate + AMP + H(+)</text>
        <dbReference type="Rhea" id="RHEA:15609"/>
        <dbReference type="ChEBI" id="CHEBI:15378"/>
        <dbReference type="ChEBI" id="CHEBI:30616"/>
        <dbReference type="ChEBI" id="CHEBI:58017"/>
        <dbReference type="ChEBI" id="CHEBI:78346"/>
        <dbReference type="ChEBI" id="CHEBI:456215"/>
        <dbReference type="EC" id="2.7.6.1"/>
    </reaction>
</comment>
<comment type="cofactor">
    <cofactor evidence="1">
        <name>Mg(2+)</name>
        <dbReference type="ChEBI" id="CHEBI:18420"/>
    </cofactor>
    <text evidence="1">Binds 2 Mg(2+) ions per subunit.</text>
</comment>
<comment type="pathway">
    <text evidence="1">Metabolic intermediate biosynthesis; 5-phospho-alpha-D-ribose 1-diphosphate biosynthesis; 5-phospho-alpha-D-ribose 1-diphosphate from D-ribose 5-phosphate (route I): step 1/1.</text>
</comment>
<comment type="subunit">
    <text evidence="1">Homohexamer.</text>
</comment>
<comment type="subcellular location">
    <subcellularLocation>
        <location evidence="1">Cytoplasm</location>
    </subcellularLocation>
</comment>
<comment type="similarity">
    <text evidence="1">Belongs to the ribose-phosphate pyrophosphokinase family. Class I subfamily.</text>
</comment>
<organism>
    <name type="scientific">Pseudomonas syringae pv. tomato (strain ATCC BAA-871 / DC3000)</name>
    <dbReference type="NCBI Taxonomy" id="223283"/>
    <lineage>
        <taxon>Bacteria</taxon>
        <taxon>Pseudomonadati</taxon>
        <taxon>Pseudomonadota</taxon>
        <taxon>Gammaproteobacteria</taxon>
        <taxon>Pseudomonadales</taxon>
        <taxon>Pseudomonadaceae</taxon>
        <taxon>Pseudomonas</taxon>
    </lineage>
</organism>
<name>KPRS_PSESM</name>
<sequence>MSKMMVFTGNANPDLARRVVRQLHIPLGDVSVGKFSDGEISTEINENVRGKDVFIIQPTCAPTNDNLMELVVMADAFRRSSASRITAVIPYFGYARQDRRPRSARVAISAKVVADMLTVVGIDRVLTVDLHADQIQGFFDIPVDNIYGSPVLVDDIEDQRFENLMIVSPDIGGVVRARAVAKSLGVDLGIIDKRREKANHSEVMHIIGDVEGRTCILVDDMVDTAGTLCHAAKALKEHGAAKVFAYCTHPVLSGRAIENIENSVLDELVVTNTIPLSAAAQACSRIRQLDIAPVVAEAVRRISNEESISAMFR</sequence>
<gene>
    <name evidence="1" type="primary">prs</name>
    <name type="synonym">prsA</name>
    <name type="ordered locus">PSPTO_1104</name>
</gene>
<accession>Q888C6</accession>
<keyword id="KW-0067">ATP-binding</keyword>
<keyword id="KW-0963">Cytoplasm</keyword>
<keyword id="KW-0418">Kinase</keyword>
<keyword id="KW-0460">Magnesium</keyword>
<keyword id="KW-0479">Metal-binding</keyword>
<keyword id="KW-0545">Nucleotide biosynthesis</keyword>
<keyword id="KW-0547">Nucleotide-binding</keyword>
<keyword id="KW-1185">Reference proteome</keyword>
<keyword id="KW-0808">Transferase</keyword>
<feature type="chain" id="PRO_0000141178" description="Ribose-phosphate pyrophosphokinase">
    <location>
        <begin position="1"/>
        <end position="313"/>
    </location>
</feature>
<feature type="active site" evidence="1">
    <location>
        <position position="193"/>
    </location>
</feature>
<feature type="binding site" evidence="1">
    <location>
        <begin position="37"/>
        <end position="39"/>
    </location>
    <ligand>
        <name>ATP</name>
        <dbReference type="ChEBI" id="CHEBI:30616"/>
    </ligand>
</feature>
<feature type="binding site" evidence="1">
    <location>
        <begin position="96"/>
        <end position="97"/>
    </location>
    <ligand>
        <name>ATP</name>
        <dbReference type="ChEBI" id="CHEBI:30616"/>
    </ligand>
</feature>
<feature type="binding site" evidence="1">
    <location>
        <position position="131"/>
    </location>
    <ligand>
        <name>Mg(2+)</name>
        <dbReference type="ChEBI" id="CHEBI:18420"/>
        <label>1</label>
    </ligand>
</feature>
<feature type="binding site" evidence="1">
    <location>
        <position position="170"/>
    </location>
    <ligand>
        <name>Mg(2+)</name>
        <dbReference type="ChEBI" id="CHEBI:18420"/>
        <label>2</label>
    </ligand>
</feature>
<feature type="binding site" evidence="1">
    <location>
        <position position="195"/>
    </location>
    <ligand>
        <name>D-ribose 5-phosphate</name>
        <dbReference type="ChEBI" id="CHEBI:78346"/>
    </ligand>
</feature>
<feature type="binding site" evidence="1">
    <location>
        <position position="219"/>
    </location>
    <ligand>
        <name>D-ribose 5-phosphate</name>
        <dbReference type="ChEBI" id="CHEBI:78346"/>
    </ligand>
</feature>
<feature type="binding site" evidence="1">
    <location>
        <begin position="223"/>
        <end position="227"/>
    </location>
    <ligand>
        <name>D-ribose 5-phosphate</name>
        <dbReference type="ChEBI" id="CHEBI:78346"/>
    </ligand>
</feature>
<protein>
    <recommendedName>
        <fullName evidence="1">Ribose-phosphate pyrophosphokinase</fullName>
        <shortName evidence="1">RPPK</shortName>
        <ecNumber evidence="1">2.7.6.1</ecNumber>
    </recommendedName>
    <alternativeName>
        <fullName evidence="1">5-phospho-D-ribosyl alpha-1-diphosphate synthase</fullName>
    </alternativeName>
    <alternativeName>
        <fullName evidence="1">Phosphoribosyl diphosphate synthase</fullName>
    </alternativeName>
    <alternativeName>
        <fullName evidence="1">Phosphoribosyl pyrophosphate synthase</fullName>
        <shortName evidence="1">P-Rib-PP synthase</shortName>
        <shortName evidence="1">PRPP synthase</shortName>
        <shortName evidence="1">PRPPase</shortName>
    </alternativeName>
</protein>
<reference key="1">
    <citation type="journal article" date="2003" name="Proc. Natl. Acad. Sci. U.S.A.">
        <title>The complete genome sequence of the Arabidopsis and tomato pathogen Pseudomonas syringae pv. tomato DC3000.</title>
        <authorList>
            <person name="Buell C.R."/>
            <person name="Joardar V."/>
            <person name="Lindeberg M."/>
            <person name="Selengut J."/>
            <person name="Paulsen I.T."/>
            <person name="Gwinn M.L."/>
            <person name="Dodson R.J."/>
            <person name="DeBoy R.T."/>
            <person name="Durkin A.S."/>
            <person name="Kolonay J.F."/>
            <person name="Madupu R."/>
            <person name="Daugherty S.C."/>
            <person name="Brinkac L.M."/>
            <person name="Beanan M.J."/>
            <person name="Haft D.H."/>
            <person name="Nelson W.C."/>
            <person name="Davidsen T.M."/>
            <person name="Zafar N."/>
            <person name="Zhou L."/>
            <person name="Liu J."/>
            <person name="Yuan Q."/>
            <person name="Khouri H.M."/>
            <person name="Fedorova N.B."/>
            <person name="Tran B."/>
            <person name="Russell D."/>
            <person name="Berry K.J."/>
            <person name="Utterback T.R."/>
            <person name="Van Aken S.E."/>
            <person name="Feldblyum T.V."/>
            <person name="D'Ascenzo M."/>
            <person name="Deng W.-L."/>
            <person name="Ramos A.R."/>
            <person name="Alfano J.R."/>
            <person name="Cartinhour S."/>
            <person name="Chatterjee A.K."/>
            <person name="Delaney T.P."/>
            <person name="Lazarowitz S.G."/>
            <person name="Martin G.B."/>
            <person name="Schneider D.J."/>
            <person name="Tang X."/>
            <person name="Bender C.L."/>
            <person name="White O."/>
            <person name="Fraser C.M."/>
            <person name="Collmer A."/>
        </authorList>
    </citation>
    <scope>NUCLEOTIDE SEQUENCE [LARGE SCALE GENOMIC DNA]</scope>
    <source>
        <strain>ATCC BAA-871 / DC3000</strain>
    </source>
</reference>
<dbReference type="EC" id="2.7.6.1" evidence="1"/>
<dbReference type="EMBL" id="AE016853">
    <property type="protein sequence ID" value="AAO54633.1"/>
    <property type="molecule type" value="Genomic_DNA"/>
</dbReference>
<dbReference type="RefSeq" id="NP_790938.1">
    <property type="nucleotide sequence ID" value="NC_004578.1"/>
</dbReference>
<dbReference type="RefSeq" id="WP_002552145.1">
    <property type="nucleotide sequence ID" value="NC_004578.1"/>
</dbReference>
<dbReference type="SMR" id="Q888C6"/>
<dbReference type="STRING" id="223283.PSPTO_1104"/>
<dbReference type="KEGG" id="pst:PSPTO_1104"/>
<dbReference type="PATRIC" id="fig|223283.9.peg.1114"/>
<dbReference type="eggNOG" id="COG0462">
    <property type="taxonomic scope" value="Bacteria"/>
</dbReference>
<dbReference type="HOGENOM" id="CLU_033546_2_0_6"/>
<dbReference type="OrthoDB" id="9777067at2"/>
<dbReference type="PhylomeDB" id="Q888C6"/>
<dbReference type="UniPathway" id="UPA00087">
    <property type="reaction ID" value="UER00172"/>
</dbReference>
<dbReference type="Proteomes" id="UP000002515">
    <property type="component" value="Chromosome"/>
</dbReference>
<dbReference type="GO" id="GO:0005737">
    <property type="term" value="C:cytoplasm"/>
    <property type="evidence" value="ECO:0007669"/>
    <property type="project" value="UniProtKB-SubCell"/>
</dbReference>
<dbReference type="GO" id="GO:0002189">
    <property type="term" value="C:ribose phosphate diphosphokinase complex"/>
    <property type="evidence" value="ECO:0007669"/>
    <property type="project" value="TreeGrafter"/>
</dbReference>
<dbReference type="GO" id="GO:0005524">
    <property type="term" value="F:ATP binding"/>
    <property type="evidence" value="ECO:0007669"/>
    <property type="project" value="UniProtKB-KW"/>
</dbReference>
<dbReference type="GO" id="GO:0016301">
    <property type="term" value="F:kinase activity"/>
    <property type="evidence" value="ECO:0007669"/>
    <property type="project" value="UniProtKB-KW"/>
</dbReference>
<dbReference type="GO" id="GO:0000287">
    <property type="term" value="F:magnesium ion binding"/>
    <property type="evidence" value="ECO:0007669"/>
    <property type="project" value="UniProtKB-UniRule"/>
</dbReference>
<dbReference type="GO" id="GO:0004749">
    <property type="term" value="F:ribose phosphate diphosphokinase activity"/>
    <property type="evidence" value="ECO:0007669"/>
    <property type="project" value="UniProtKB-UniRule"/>
</dbReference>
<dbReference type="GO" id="GO:0006015">
    <property type="term" value="P:5-phosphoribose 1-diphosphate biosynthetic process"/>
    <property type="evidence" value="ECO:0007669"/>
    <property type="project" value="UniProtKB-UniRule"/>
</dbReference>
<dbReference type="GO" id="GO:0006164">
    <property type="term" value="P:purine nucleotide biosynthetic process"/>
    <property type="evidence" value="ECO:0007669"/>
    <property type="project" value="TreeGrafter"/>
</dbReference>
<dbReference type="GO" id="GO:0009156">
    <property type="term" value="P:ribonucleoside monophosphate biosynthetic process"/>
    <property type="evidence" value="ECO:0007669"/>
    <property type="project" value="InterPro"/>
</dbReference>
<dbReference type="CDD" id="cd06223">
    <property type="entry name" value="PRTases_typeI"/>
    <property type="match status" value="1"/>
</dbReference>
<dbReference type="FunFam" id="3.40.50.2020:FF:000001">
    <property type="entry name" value="Ribose-phosphate pyrophosphokinase"/>
    <property type="match status" value="1"/>
</dbReference>
<dbReference type="Gene3D" id="3.40.50.2020">
    <property type="match status" value="2"/>
</dbReference>
<dbReference type="HAMAP" id="MF_00583_B">
    <property type="entry name" value="RibP_PPkinase_B"/>
    <property type="match status" value="1"/>
</dbReference>
<dbReference type="InterPro" id="IPR000842">
    <property type="entry name" value="PRib_PP_synth_CS"/>
</dbReference>
<dbReference type="InterPro" id="IPR029099">
    <property type="entry name" value="Pribosyltran_N"/>
</dbReference>
<dbReference type="InterPro" id="IPR000836">
    <property type="entry name" value="PRibTrfase_dom"/>
</dbReference>
<dbReference type="InterPro" id="IPR029057">
    <property type="entry name" value="PRTase-like"/>
</dbReference>
<dbReference type="InterPro" id="IPR005946">
    <property type="entry name" value="Rib-P_diPkinase"/>
</dbReference>
<dbReference type="InterPro" id="IPR037515">
    <property type="entry name" value="Rib-P_diPkinase_bac"/>
</dbReference>
<dbReference type="NCBIfam" id="NF002320">
    <property type="entry name" value="PRK01259.1"/>
    <property type="match status" value="1"/>
</dbReference>
<dbReference type="NCBIfam" id="TIGR01251">
    <property type="entry name" value="ribP_PPkin"/>
    <property type="match status" value="1"/>
</dbReference>
<dbReference type="PANTHER" id="PTHR10210">
    <property type="entry name" value="RIBOSE-PHOSPHATE DIPHOSPHOKINASE FAMILY MEMBER"/>
    <property type="match status" value="1"/>
</dbReference>
<dbReference type="PANTHER" id="PTHR10210:SF41">
    <property type="entry name" value="RIBOSE-PHOSPHATE PYROPHOSPHOKINASE 1, CHLOROPLASTIC"/>
    <property type="match status" value="1"/>
</dbReference>
<dbReference type="Pfam" id="PF14572">
    <property type="entry name" value="Pribosyl_synth"/>
    <property type="match status" value="1"/>
</dbReference>
<dbReference type="Pfam" id="PF13793">
    <property type="entry name" value="Pribosyltran_N"/>
    <property type="match status" value="1"/>
</dbReference>
<dbReference type="SMART" id="SM01400">
    <property type="entry name" value="Pribosyltran_N"/>
    <property type="match status" value="1"/>
</dbReference>
<dbReference type="SUPFAM" id="SSF53271">
    <property type="entry name" value="PRTase-like"/>
    <property type="match status" value="1"/>
</dbReference>
<dbReference type="PROSITE" id="PS00114">
    <property type="entry name" value="PRPP_SYNTHASE"/>
    <property type="match status" value="1"/>
</dbReference>
<proteinExistence type="inferred from homology"/>
<evidence type="ECO:0000255" key="1">
    <source>
        <dbReference type="HAMAP-Rule" id="MF_00583"/>
    </source>
</evidence>